<dbReference type="EMBL" id="D17697">
    <property type="protein sequence ID" value="BAA04560.1"/>
    <property type="molecule type" value="mRNA"/>
</dbReference>
<dbReference type="PIR" id="PN0496">
    <property type="entry name" value="PN0496"/>
</dbReference>
<dbReference type="FunCoup" id="P34819">
    <property type="interactions" value="133"/>
</dbReference>
<dbReference type="STRING" id="9615.ENSCAFP00000041323"/>
<dbReference type="GlyCosmos" id="P34819">
    <property type="glycosylation" value="1 site, No reported glycans"/>
</dbReference>
<dbReference type="PaxDb" id="9612-ENSCAFP00000017683"/>
<dbReference type="eggNOG" id="KOG3900">
    <property type="taxonomic scope" value="Eukaryota"/>
</dbReference>
<dbReference type="InParanoid" id="P34819"/>
<dbReference type="OrthoDB" id="5987191at2759"/>
<dbReference type="Proteomes" id="UP000002254">
    <property type="component" value="Unplaced"/>
</dbReference>
<dbReference type="Proteomes" id="UP000694429">
    <property type="component" value="Unplaced"/>
</dbReference>
<dbReference type="Proteomes" id="UP000694542">
    <property type="component" value="Unplaced"/>
</dbReference>
<dbReference type="Proteomes" id="UP000805418">
    <property type="component" value="Unplaced"/>
</dbReference>
<dbReference type="GO" id="GO:0005615">
    <property type="term" value="C:extracellular space"/>
    <property type="evidence" value="ECO:0007669"/>
    <property type="project" value="UniProtKB-KW"/>
</dbReference>
<dbReference type="GO" id="GO:0005125">
    <property type="term" value="F:cytokine activity"/>
    <property type="evidence" value="ECO:0007669"/>
    <property type="project" value="UniProtKB-KW"/>
</dbReference>
<dbReference type="GO" id="GO:0008083">
    <property type="term" value="F:growth factor activity"/>
    <property type="evidence" value="ECO:0007669"/>
    <property type="project" value="UniProtKB-KW"/>
</dbReference>
<dbReference type="GO" id="GO:0051216">
    <property type="term" value="P:cartilage development"/>
    <property type="evidence" value="ECO:0007669"/>
    <property type="project" value="UniProtKB-KW"/>
</dbReference>
<dbReference type="GO" id="GO:0048762">
    <property type="term" value="P:mesenchymal cell differentiation"/>
    <property type="evidence" value="ECO:0000250"/>
    <property type="project" value="UniProtKB"/>
</dbReference>
<dbReference type="GO" id="GO:0060485">
    <property type="term" value="P:mesenchyme development"/>
    <property type="evidence" value="ECO:0000250"/>
    <property type="project" value="UniProtKB"/>
</dbReference>
<dbReference type="GO" id="GO:0072125">
    <property type="term" value="P:negative regulation of glomerular mesangial cell proliferation"/>
    <property type="evidence" value="ECO:0000250"/>
    <property type="project" value="UniProtKB"/>
</dbReference>
<dbReference type="GO" id="GO:0045839">
    <property type="term" value="P:negative regulation of mitotic nuclear division"/>
    <property type="evidence" value="ECO:0000250"/>
    <property type="project" value="UniProtKB"/>
</dbReference>
<dbReference type="GO" id="GO:0001503">
    <property type="term" value="P:ossification"/>
    <property type="evidence" value="ECO:0007669"/>
    <property type="project" value="UniProtKB-KW"/>
</dbReference>
<dbReference type="GO" id="GO:0090336">
    <property type="term" value="P:positive regulation of brown fat cell differentiation"/>
    <property type="evidence" value="ECO:0000250"/>
    <property type="project" value="UniProtKB"/>
</dbReference>
<dbReference type="GO" id="GO:0045893">
    <property type="term" value="P:positive regulation of DNA-templated transcription"/>
    <property type="evidence" value="ECO:0000250"/>
    <property type="project" value="UniProtKB"/>
</dbReference>
<dbReference type="GO" id="GO:0001657">
    <property type="term" value="P:ureteric bud development"/>
    <property type="evidence" value="ECO:0000250"/>
    <property type="project" value="UniProtKB"/>
</dbReference>
<dbReference type="FunFam" id="2.60.120.970:FF:000071">
    <property type="entry name" value="Bone morphogenetic protein 7"/>
    <property type="match status" value="1"/>
</dbReference>
<dbReference type="Gene3D" id="2.60.120.970">
    <property type="match status" value="1"/>
</dbReference>
<dbReference type="InterPro" id="IPR001111">
    <property type="entry name" value="TGF-b_propeptide"/>
</dbReference>
<dbReference type="InterPro" id="IPR015615">
    <property type="entry name" value="TGF-beta-rel"/>
</dbReference>
<dbReference type="PANTHER" id="PTHR11848:SF135">
    <property type="entry name" value="BONE MORPHOGENETIC PROTEIN 7"/>
    <property type="match status" value="1"/>
</dbReference>
<dbReference type="PANTHER" id="PTHR11848">
    <property type="entry name" value="TGF-BETA FAMILY"/>
    <property type="match status" value="1"/>
</dbReference>
<dbReference type="Pfam" id="PF00688">
    <property type="entry name" value="TGFb_propeptide"/>
    <property type="match status" value="1"/>
</dbReference>
<name>BMP7_CANLF</name>
<evidence type="ECO:0000250" key="1"/>
<evidence type="ECO:0000250" key="2">
    <source>
        <dbReference type="UniProtKB" id="P18075"/>
    </source>
</evidence>
<evidence type="ECO:0000250" key="3">
    <source>
        <dbReference type="UniProtKB" id="P23359"/>
    </source>
</evidence>
<evidence type="ECO:0000255" key="4"/>
<evidence type="ECO:0000305" key="5"/>
<sequence>GKHNSAPMFMLDLYNAMAVEEGGGPAGQGFSYPYKAVFSTQGPPLASLQDSHFLTDADMVMSFVNLVEHDKEFFHPRYHHREFRFDLSKIPEGEAVTAAEFRIYKDYIRERFDNETFRISVYQVLQEHLGRESDLFLLDSRTLWASEEGWLVFDITATSNHWVVNPRHNLGLQLCVETLDGQSINPK</sequence>
<protein>
    <recommendedName>
        <fullName>Bone morphogenetic protein 7</fullName>
        <shortName>BMP-7</shortName>
    </recommendedName>
    <alternativeName>
        <fullName>Osteogenic protein 1</fullName>
        <shortName>OP-1</shortName>
    </alternativeName>
</protein>
<feature type="chain" id="PRO_0000051610" description="Bone morphogenetic protein 7">
    <location>
        <begin position="1" status="less than"/>
        <end position="187" status="greater than"/>
    </location>
</feature>
<feature type="glycosylation site" description="N-linked (GlcNAc...) asparagine" evidence="4">
    <location>
        <position position="114"/>
    </location>
</feature>
<feature type="non-terminal residue">
    <location>
        <position position="1"/>
    </location>
</feature>
<feature type="non-terminal residue">
    <location>
        <position position="187"/>
    </location>
</feature>
<reference key="1">
    <citation type="journal article" date="1993" name="Biochem. Biophys. Res. Commun.">
        <title>Expression of bone morphogenic protein 7 mRNA in MDCK cells.</title>
        <authorList>
            <person name="Ishibashi K."/>
            <person name="Sasaki S."/>
            <person name="Akiba T."/>
            <person name="Marumo F."/>
        </authorList>
    </citation>
    <scope>NUCLEOTIDE SEQUENCE [MRNA]</scope>
    <source>
        <strain>Cocker spaniel</strain>
        <tissue>Kidney</tissue>
    </source>
</reference>
<accession>P34819</accession>
<gene>
    <name type="primary">BMP7</name>
</gene>
<organism>
    <name type="scientific">Canis lupus familiaris</name>
    <name type="common">Dog</name>
    <name type="synonym">Canis familiaris</name>
    <dbReference type="NCBI Taxonomy" id="9615"/>
    <lineage>
        <taxon>Eukaryota</taxon>
        <taxon>Metazoa</taxon>
        <taxon>Chordata</taxon>
        <taxon>Craniata</taxon>
        <taxon>Vertebrata</taxon>
        <taxon>Euteleostomi</taxon>
        <taxon>Mammalia</taxon>
        <taxon>Eutheria</taxon>
        <taxon>Laurasiatheria</taxon>
        <taxon>Carnivora</taxon>
        <taxon>Caniformia</taxon>
        <taxon>Canidae</taxon>
        <taxon>Canis</taxon>
    </lineage>
</organism>
<keyword id="KW-0891">Chondrogenesis</keyword>
<keyword id="KW-0202">Cytokine</keyword>
<keyword id="KW-0217">Developmental protein</keyword>
<keyword id="KW-0221">Differentiation</keyword>
<keyword id="KW-1015">Disulfide bond</keyword>
<keyword id="KW-0325">Glycoprotein</keyword>
<keyword id="KW-0339">Growth factor</keyword>
<keyword id="KW-0892">Osteogenesis</keyword>
<keyword id="KW-1185">Reference proteome</keyword>
<keyword id="KW-0964">Secreted</keyword>
<proteinExistence type="evidence at transcript level"/>
<comment type="function">
    <text evidence="2">Growth factor of the TGF-beta superfamily that plays important role in various biological processes, including embryogenesis, hematopoiesis, neurogenesis and skeletal morphogenesis. Initiates the canonical BMP signaling cascade by associating with type I receptor ACVR1 and type II receptor ACVR2A. Once all three components are bound together in a complex at the cell surface, ACVR2A phosphorylates and activates ACVR1. In turn, ACVR1 propagates signal by phosphorylating SMAD1/5/8 that travel to the nucleus and act as activators and repressors of transcription of target genes. For specific functions such as growth cone collapse in developing spinal neurons and chemotaxis of monocytes, also uses BMPR2 as type II receptor. Can also signal through non-canonical pathways such as P38 MAP kinase signaling cascade that promotes brown adipocyte differentiation through activation of target genes, including members of the SOX family of transcription factors. Promotes the expression of HAMP, this is repressed by its interaction with ERFE (By similarity).</text>
</comment>
<comment type="subunit">
    <text evidence="2 3">Homodimer; disulfide-linked (By similarity). Interacts with SOSTDC1 (By similarity). Interacts with TWSG1 (By similarity). Interacts with FBN1 (via N-terminal domain) and FBN2. Interacts with type I receptor ACVR1. Interacts with type II receptor ACVR2A. Interacts with NOG; this interaction inhibits canonical BMP signaling (By similarity). Interacts with SCUBE3 (By similarity). Interacts with ERFE; the interaction inhibits BMP-induced transcription of HAMP (By similarity).</text>
</comment>
<comment type="subcellular location">
    <subcellularLocation>
        <location evidence="1">Secreted</location>
    </subcellularLocation>
</comment>
<comment type="similarity">
    <text evidence="5">Belongs to the TGF-beta family.</text>
</comment>